<keyword id="KW-0349">Heme</keyword>
<keyword id="KW-0408">Iron</keyword>
<keyword id="KW-0479">Metal-binding</keyword>
<keyword id="KW-1185">Reference proteome</keyword>
<keyword id="KW-0807">Transducer</keyword>
<organism>
    <name type="scientific">Halobacterium salinarum (strain ATCC 700922 / JCM 11081 / NRC-1)</name>
    <name type="common">Halobacterium halobium</name>
    <dbReference type="NCBI Taxonomy" id="64091"/>
    <lineage>
        <taxon>Archaea</taxon>
        <taxon>Methanobacteriati</taxon>
        <taxon>Methanobacteriota</taxon>
        <taxon>Stenosarchaea group</taxon>
        <taxon>Halobacteria</taxon>
        <taxon>Halobacteriales</taxon>
        <taxon>Halobacteriaceae</taxon>
        <taxon>Halobacterium</taxon>
        <taxon>Halobacterium salinarum NRC-34001</taxon>
    </lineage>
</organism>
<feature type="chain" id="PRO_0000110568" description="Heme-based aerotactic transducer HemAT">
    <location>
        <begin position="1"/>
        <end position="489"/>
    </location>
</feature>
<feature type="domain" description="Methyl-accepting transducer" evidence="1">
    <location>
        <begin position="218"/>
        <end position="454"/>
    </location>
</feature>
<feature type="sequence conflict" description="In Ref. 1; AAB17881." evidence="3" ref="1">
    <original>SD</original>
    <variation>TH</variation>
    <location>
        <begin position="213"/>
        <end position="214"/>
    </location>
</feature>
<feature type="sequence conflict" description="In Ref. 1; AAB17881." evidence="3" ref="1">
    <original>A</original>
    <variation>R</variation>
    <location>
        <position position="239"/>
    </location>
</feature>
<feature type="sequence conflict" description="In Ref. 1; AAB17881." evidence="3" ref="1">
    <original>R</original>
    <variation>G</variation>
    <location>
        <position position="314"/>
    </location>
</feature>
<feature type="sequence conflict" description="In Ref. 1; AAB17881." evidence="3" ref="1">
    <original>D</original>
    <variation>G</variation>
    <location>
        <position position="452"/>
    </location>
</feature>
<accession>Q9HPR6</accession>
<accession>P71413</accession>
<sequence>MSNDNDTLVTADVRNGIDGHALADRIGLDEAEIAWRLSFTGIDDDTMAALAAEQPLFEATADALVTDFYDHLESYERTQDLFANSTKTVEQLKETQAEYLLGLGRGEYDTEYAAQRARIGKIHDVLGLGPDVYLGAYTRYYTGLLDALADDVVADRGEEAAAAVDELVARFLPMLKLLTFDQQIAMDTYIDSYAQRLHDEIDSRQELANAVASDVEAPLSSLEATSQDVAERTDTMRAATDDQVDRMADVSREISSVSASVEEVASTADDVRRTSEDAEALAQQGEAAADDALATMTDIDEATDGVTAGVEQLRERAADVESVTGVIDDIAEQTNMLALNASIEAARAGEAGEGFAVVADEVKALAEESREQSTRVEELVEQMQAETEETVDQLDEVNQRIGEGVERVEEAMETLQEITDAVEDAASGMQEVSTATDEQAVSTEEVAEMVDDVDDRAGEIAAALDDIADATDQQVRTVEEVRETVGKLS</sequence>
<gene>
    <name type="primary">hemAT</name>
    <name type="synonym">htb</name>
    <name type="synonym">htr10</name>
    <name type="ordered locus">VNG_1505G</name>
</gene>
<proteinExistence type="inferred from homology"/>
<dbReference type="EMBL" id="U75436">
    <property type="protein sequence ID" value="AAB17881.1"/>
    <property type="molecule type" value="Genomic_DNA"/>
</dbReference>
<dbReference type="EMBL" id="AE004437">
    <property type="protein sequence ID" value="AAG19801.1"/>
    <property type="molecule type" value="Genomic_DNA"/>
</dbReference>
<dbReference type="PIR" id="E84304">
    <property type="entry name" value="E84304"/>
</dbReference>
<dbReference type="PIR" id="T44978">
    <property type="entry name" value="T44978"/>
</dbReference>
<dbReference type="RefSeq" id="WP_010903098.1">
    <property type="nucleotide sequence ID" value="NC_002607.1"/>
</dbReference>
<dbReference type="SMR" id="Q9HPR6"/>
<dbReference type="STRING" id="64091.VNG_1505G"/>
<dbReference type="PaxDb" id="64091-VNG_1505G"/>
<dbReference type="GeneID" id="68694211"/>
<dbReference type="KEGG" id="hal:VNG_1505G"/>
<dbReference type="PATRIC" id="fig|64091.14.peg.1151"/>
<dbReference type="HOGENOM" id="CLU_000445_21_2_2"/>
<dbReference type="InParanoid" id="Q9HPR6"/>
<dbReference type="OrthoDB" id="8523at2157"/>
<dbReference type="PhylomeDB" id="Q9HPR6"/>
<dbReference type="Proteomes" id="UP000000554">
    <property type="component" value="Chromosome"/>
</dbReference>
<dbReference type="GO" id="GO:0016020">
    <property type="term" value="C:membrane"/>
    <property type="evidence" value="ECO:0007669"/>
    <property type="project" value="InterPro"/>
</dbReference>
<dbReference type="GO" id="GO:0020037">
    <property type="term" value="F:heme binding"/>
    <property type="evidence" value="ECO:0000314"/>
    <property type="project" value="UniProtKB"/>
</dbReference>
<dbReference type="GO" id="GO:0046872">
    <property type="term" value="F:metal ion binding"/>
    <property type="evidence" value="ECO:0007669"/>
    <property type="project" value="UniProtKB-KW"/>
</dbReference>
<dbReference type="GO" id="GO:0019825">
    <property type="term" value="F:oxygen binding"/>
    <property type="evidence" value="ECO:0007669"/>
    <property type="project" value="InterPro"/>
</dbReference>
<dbReference type="GO" id="GO:0004888">
    <property type="term" value="F:transmembrane signaling receptor activity"/>
    <property type="evidence" value="ECO:0007669"/>
    <property type="project" value="InterPro"/>
</dbReference>
<dbReference type="GO" id="GO:0009454">
    <property type="term" value="P:aerotaxis"/>
    <property type="evidence" value="ECO:0000314"/>
    <property type="project" value="UniProtKB"/>
</dbReference>
<dbReference type="GO" id="GO:0006935">
    <property type="term" value="P:chemotaxis"/>
    <property type="evidence" value="ECO:0000318"/>
    <property type="project" value="GO_Central"/>
</dbReference>
<dbReference type="GO" id="GO:0007165">
    <property type="term" value="P:signal transduction"/>
    <property type="evidence" value="ECO:0000314"/>
    <property type="project" value="UniProtKB"/>
</dbReference>
<dbReference type="CDD" id="cd01068">
    <property type="entry name" value="globin_sensor"/>
    <property type="match status" value="1"/>
</dbReference>
<dbReference type="CDD" id="cd11386">
    <property type="entry name" value="MCP_signal"/>
    <property type="match status" value="1"/>
</dbReference>
<dbReference type="Gene3D" id="1.10.490.10">
    <property type="entry name" value="Globins"/>
    <property type="match status" value="1"/>
</dbReference>
<dbReference type="Gene3D" id="1.10.287.950">
    <property type="entry name" value="Methyl-accepting chemotaxis protein"/>
    <property type="match status" value="1"/>
</dbReference>
<dbReference type="InterPro" id="IPR004090">
    <property type="entry name" value="Chemotax_Me-accpt_rcpt"/>
</dbReference>
<dbReference type="InterPro" id="IPR009050">
    <property type="entry name" value="Globin-like_sf"/>
</dbReference>
<dbReference type="InterPro" id="IPR044398">
    <property type="entry name" value="Globin-sensor_dom"/>
</dbReference>
<dbReference type="InterPro" id="IPR012292">
    <property type="entry name" value="Globin/Proto"/>
</dbReference>
<dbReference type="InterPro" id="IPR004089">
    <property type="entry name" value="MCPsignal_dom"/>
</dbReference>
<dbReference type="InterPro" id="IPR039379">
    <property type="entry name" value="Protoglobin_sensor_dom"/>
</dbReference>
<dbReference type="PANTHER" id="PTHR32089:SF112">
    <property type="entry name" value="LYSOZYME-LIKE PROTEIN-RELATED"/>
    <property type="match status" value="1"/>
</dbReference>
<dbReference type="PANTHER" id="PTHR32089">
    <property type="entry name" value="METHYL-ACCEPTING CHEMOTAXIS PROTEIN MCPB"/>
    <property type="match status" value="1"/>
</dbReference>
<dbReference type="Pfam" id="PF00015">
    <property type="entry name" value="MCPsignal"/>
    <property type="match status" value="1"/>
</dbReference>
<dbReference type="Pfam" id="PF11563">
    <property type="entry name" value="Protoglobin"/>
    <property type="match status" value="1"/>
</dbReference>
<dbReference type="PRINTS" id="PR00260">
    <property type="entry name" value="CHEMTRNSDUCR"/>
</dbReference>
<dbReference type="SMART" id="SM00283">
    <property type="entry name" value="MA"/>
    <property type="match status" value="1"/>
</dbReference>
<dbReference type="SUPFAM" id="SSF46458">
    <property type="entry name" value="Globin-like"/>
    <property type="match status" value="1"/>
</dbReference>
<dbReference type="SUPFAM" id="SSF58104">
    <property type="entry name" value="Methyl-accepting chemotaxis protein (MCP) signaling domain"/>
    <property type="match status" value="1"/>
</dbReference>
<dbReference type="PROSITE" id="PS50111">
    <property type="entry name" value="CHEMOTAXIS_TRANSDUC_2"/>
    <property type="match status" value="1"/>
</dbReference>
<protein>
    <recommendedName>
        <fullName>Heme-based aerotactic transducer HemAT</fullName>
    </recommendedName>
</protein>
<name>HMAT_HALSA</name>
<comment type="function">
    <text evidence="2">Heme-containing signal transducer responsible for aerotaxis, the migratory response toward or away from oxygen.</text>
</comment>
<comment type="subunit">
    <text evidence="3">Homotetramer.</text>
</comment>
<comment type="similarity">
    <text evidence="3">Belongs to the methyl-accepting chemotaxis (MCP) protein family.</text>
</comment>
<evidence type="ECO:0000255" key="1">
    <source>
        <dbReference type="PROSITE-ProRule" id="PRU00284"/>
    </source>
</evidence>
<evidence type="ECO:0000269" key="2">
    <source>
    </source>
</evidence>
<evidence type="ECO:0000305" key="3"/>
<reference key="1">
    <citation type="journal article" date="1996" name="Proc. Natl. Acad. Sci. U.S.A.">
        <title>Signal transduction in the archaeon Halobacterium salinarium is processed through three subfamilies of 13 soluble and membrane-bound transducer proteins.</title>
        <authorList>
            <person name="Zhang W."/>
            <person name="Brooun A."/>
            <person name="McCandless J."/>
            <person name="Banda P."/>
            <person name="Alam M."/>
        </authorList>
    </citation>
    <scope>NUCLEOTIDE SEQUENCE [GENOMIC DNA]</scope>
    <source>
        <strain>Flx15</strain>
    </source>
</reference>
<reference key="2">
    <citation type="journal article" date="2000" name="Proc. Natl. Acad. Sci. U.S.A.">
        <title>Genome sequence of Halobacterium species NRC-1.</title>
        <authorList>
            <person name="Ng W.V."/>
            <person name="Kennedy S.P."/>
            <person name="Mahairas G.G."/>
            <person name="Berquist B."/>
            <person name="Pan M."/>
            <person name="Shukla H.D."/>
            <person name="Lasky S.R."/>
            <person name="Baliga N.S."/>
            <person name="Thorsson V."/>
            <person name="Sbrogna J."/>
            <person name="Swartzell S."/>
            <person name="Weir D."/>
            <person name="Hall J."/>
            <person name="Dahl T.A."/>
            <person name="Welti R."/>
            <person name="Goo Y.A."/>
            <person name="Leithauser B."/>
            <person name="Keller K."/>
            <person name="Cruz R."/>
            <person name="Danson M.J."/>
            <person name="Hough D.W."/>
            <person name="Maddocks D.G."/>
            <person name="Jablonski P.E."/>
            <person name="Krebs M.P."/>
            <person name="Angevine C.M."/>
            <person name="Dale H."/>
            <person name="Isenbarger T.A."/>
            <person name="Peck R.F."/>
            <person name="Pohlschroder M."/>
            <person name="Spudich J.L."/>
            <person name="Jung K.-H."/>
            <person name="Alam M."/>
            <person name="Freitas T."/>
            <person name="Hou S."/>
            <person name="Daniels C.J."/>
            <person name="Dennis P.P."/>
            <person name="Omer A.D."/>
            <person name="Ebhardt H."/>
            <person name="Lowe T.M."/>
            <person name="Liang P."/>
            <person name="Riley M."/>
            <person name="Hood L."/>
            <person name="DasSarma S."/>
        </authorList>
    </citation>
    <scope>NUCLEOTIDE SEQUENCE [LARGE SCALE GENOMIC DNA]</scope>
    <source>
        <strain>ATCC 700922 / JCM 11081 / NRC-1</strain>
    </source>
</reference>
<reference key="3">
    <citation type="journal article" date="2000" name="Nature">
        <title>Myoglobin-like aerotaxis transducers in Archaea and Bacteria.</title>
        <authorList>
            <person name="Hou S."/>
            <person name="Larsen R.W."/>
            <person name="Boudko D."/>
            <person name="Riley C.W."/>
            <person name="Karatan E."/>
            <person name="Zimmer M."/>
            <person name="Ordal G.W."/>
            <person name="Alam M."/>
        </authorList>
    </citation>
    <scope>FUNCTION</scope>
</reference>